<gene>
    <name evidence="1" type="primary">rpl32</name>
</gene>
<evidence type="ECO:0000255" key="1">
    <source>
        <dbReference type="HAMAP-Rule" id="MF_00340"/>
    </source>
</evidence>
<evidence type="ECO:0000305" key="2"/>
<dbReference type="EMBL" id="DQ887677">
    <property type="protein sequence ID" value="ABI14528.1"/>
    <property type="molecule type" value="Genomic_DNA"/>
</dbReference>
<dbReference type="RefSeq" id="YP_784530.1">
    <property type="nucleotide sequence ID" value="NC_008457.1"/>
</dbReference>
<dbReference type="SMR" id="Q06GK3"/>
<dbReference type="GeneID" id="4363679"/>
<dbReference type="GO" id="GO:0009507">
    <property type="term" value="C:chloroplast"/>
    <property type="evidence" value="ECO:0007669"/>
    <property type="project" value="UniProtKB-SubCell"/>
</dbReference>
<dbReference type="GO" id="GO:0015934">
    <property type="term" value="C:large ribosomal subunit"/>
    <property type="evidence" value="ECO:0007669"/>
    <property type="project" value="InterPro"/>
</dbReference>
<dbReference type="GO" id="GO:0003735">
    <property type="term" value="F:structural constituent of ribosome"/>
    <property type="evidence" value="ECO:0007669"/>
    <property type="project" value="InterPro"/>
</dbReference>
<dbReference type="GO" id="GO:0006412">
    <property type="term" value="P:translation"/>
    <property type="evidence" value="ECO:0007669"/>
    <property type="project" value="UniProtKB-UniRule"/>
</dbReference>
<dbReference type="HAMAP" id="MF_00340">
    <property type="entry name" value="Ribosomal_bL32"/>
    <property type="match status" value="1"/>
</dbReference>
<dbReference type="InterPro" id="IPR002677">
    <property type="entry name" value="Ribosomal_bL32"/>
</dbReference>
<dbReference type="InterPro" id="IPR044958">
    <property type="entry name" value="Ribosomal_bL32_plant/cyanobact"/>
</dbReference>
<dbReference type="InterPro" id="IPR011332">
    <property type="entry name" value="Ribosomal_zn-bd"/>
</dbReference>
<dbReference type="PANTHER" id="PTHR36083">
    <property type="entry name" value="50S RIBOSOMAL PROTEIN L32, CHLOROPLASTIC"/>
    <property type="match status" value="1"/>
</dbReference>
<dbReference type="PANTHER" id="PTHR36083:SF1">
    <property type="entry name" value="LARGE RIBOSOMAL SUBUNIT PROTEIN BL32C"/>
    <property type="match status" value="1"/>
</dbReference>
<dbReference type="Pfam" id="PF01783">
    <property type="entry name" value="Ribosomal_L32p"/>
    <property type="match status" value="1"/>
</dbReference>
<dbReference type="SUPFAM" id="SSF57829">
    <property type="entry name" value="Zn-binding ribosomal proteins"/>
    <property type="match status" value="1"/>
</dbReference>
<accession>Q06GK3</accession>
<protein>
    <recommendedName>
        <fullName evidence="1">Large ribosomal subunit protein bL32c</fullName>
    </recommendedName>
    <alternativeName>
        <fullName evidence="2">50S ribosomal protein L32, chloroplastic</fullName>
    </alternativeName>
</protein>
<organism>
    <name type="scientific">Piper cenocladum</name>
    <name type="common">Ant piper</name>
    <dbReference type="NCBI Taxonomy" id="398741"/>
    <lineage>
        <taxon>Eukaryota</taxon>
        <taxon>Viridiplantae</taxon>
        <taxon>Streptophyta</taxon>
        <taxon>Embryophyta</taxon>
        <taxon>Tracheophyta</taxon>
        <taxon>Spermatophyta</taxon>
        <taxon>Magnoliopsida</taxon>
        <taxon>Magnoliidae</taxon>
        <taxon>Piperales</taxon>
        <taxon>Piperaceae</taxon>
        <taxon>Piper</taxon>
    </lineage>
</organism>
<reference key="1">
    <citation type="journal article" date="2006" name="BMC Evol. Biol.">
        <title>Complete plastid genome sequences of Drimys, Liriodendron, and Piper: implications for the phylogenetic relationships of magnoliids.</title>
        <authorList>
            <person name="Cai Z."/>
            <person name="Penaflor C."/>
            <person name="Kuehl J.V."/>
            <person name="Leebens-Mack J."/>
            <person name="Carlson J.E."/>
            <person name="dePamphilis C.W."/>
            <person name="Boore J.L."/>
            <person name="Jansen R.K."/>
        </authorList>
    </citation>
    <scope>NUCLEOTIDE SEQUENCE [LARGE SCALE GENOMIC DNA]</scope>
</reference>
<name>RK32_PIPCE</name>
<keyword id="KW-0150">Chloroplast</keyword>
<keyword id="KW-0934">Plastid</keyword>
<keyword id="KW-0687">Ribonucleoprotein</keyword>
<keyword id="KW-0689">Ribosomal protein</keyword>
<geneLocation type="chloroplast"/>
<comment type="subcellular location">
    <subcellularLocation>
        <location>Plastid</location>
        <location>Chloroplast</location>
    </subcellularLocation>
</comment>
<comment type="similarity">
    <text evidence="1">Belongs to the bacterial ribosomal protein bL32 family.</text>
</comment>
<proteinExistence type="inferred from homology"/>
<sequence length="54" mass="6414">MAVPKKRTSISKKRIRRNIWKKRGYWEAKRAFSLAKSISSGRSKSFFVLQKNKQ</sequence>
<feature type="chain" id="PRO_0000276484" description="Large ribosomal subunit protein bL32c">
    <location>
        <begin position="1"/>
        <end position="54"/>
    </location>
</feature>